<gene>
    <name type="primary">mat</name>
    <name type="ordered locus">AF_0050</name>
</gene>
<proteinExistence type="inferred from homology"/>
<keyword id="KW-0067">ATP-binding</keyword>
<keyword id="KW-0460">Magnesium</keyword>
<keyword id="KW-0547">Nucleotide-binding</keyword>
<keyword id="KW-0554">One-carbon metabolism</keyword>
<keyword id="KW-1185">Reference proteome</keyword>
<keyword id="KW-0808">Transferase</keyword>
<protein>
    <recommendedName>
        <fullName>S-adenosylmethionine synthase</fullName>
        <shortName>AdoMet synthase</shortName>
        <ecNumber>2.5.1.6</ecNumber>
    </recommendedName>
    <alternativeName>
        <fullName>Methionine adenosyltransferase</fullName>
    </alternativeName>
</protein>
<evidence type="ECO:0000250" key="1"/>
<evidence type="ECO:0000255" key="2"/>
<evidence type="ECO:0000305" key="3"/>
<comment type="function">
    <text evidence="1">Catalyzes the formation of S-adenosylmethionine from methionine and ATP.</text>
</comment>
<comment type="catalytic activity">
    <reaction>
        <text>L-methionine + ATP + H2O = S-adenosyl-L-methionine + phosphate + diphosphate</text>
        <dbReference type="Rhea" id="RHEA:21080"/>
        <dbReference type="ChEBI" id="CHEBI:15377"/>
        <dbReference type="ChEBI" id="CHEBI:30616"/>
        <dbReference type="ChEBI" id="CHEBI:33019"/>
        <dbReference type="ChEBI" id="CHEBI:43474"/>
        <dbReference type="ChEBI" id="CHEBI:57844"/>
        <dbReference type="ChEBI" id="CHEBI:59789"/>
        <dbReference type="EC" id="2.5.1.6"/>
    </reaction>
</comment>
<comment type="cofactor">
    <cofactor evidence="1">
        <name>Mg(2+)</name>
        <dbReference type="ChEBI" id="CHEBI:18420"/>
    </cofactor>
</comment>
<comment type="pathway">
    <text>Amino-acid biosynthesis; S-adenosyl-L-methionine biosynthesis; S-adenosyl-L-methionine from L-methionine: step 1/1.</text>
</comment>
<comment type="similarity">
    <text evidence="3">Belongs to the AdoMet synthase 2 family.</text>
</comment>
<name>METK_ARCFU</name>
<dbReference type="EC" id="2.5.1.6"/>
<dbReference type="EMBL" id="AE000782">
    <property type="protein sequence ID" value="AAB91181.1"/>
    <property type="molecule type" value="Genomic_DNA"/>
</dbReference>
<dbReference type="PIR" id="B69256">
    <property type="entry name" value="B69256"/>
</dbReference>
<dbReference type="RefSeq" id="WP_010877564.1">
    <property type="nucleotide sequence ID" value="NC_000917.1"/>
</dbReference>
<dbReference type="SMR" id="O30186"/>
<dbReference type="STRING" id="224325.AF_0050"/>
<dbReference type="PaxDb" id="224325-AF_0050"/>
<dbReference type="EnsemblBacteria" id="AAB91181">
    <property type="protein sequence ID" value="AAB91181"/>
    <property type="gene ID" value="AF_0050"/>
</dbReference>
<dbReference type="KEGG" id="afu:AF_0050"/>
<dbReference type="eggNOG" id="arCOG01678">
    <property type="taxonomic scope" value="Archaea"/>
</dbReference>
<dbReference type="HOGENOM" id="CLU_057642_0_0_2"/>
<dbReference type="OrthoDB" id="204488at2157"/>
<dbReference type="PhylomeDB" id="O30186"/>
<dbReference type="UniPathway" id="UPA00315">
    <property type="reaction ID" value="UER00080"/>
</dbReference>
<dbReference type="Proteomes" id="UP000002199">
    <property type="component" value="Chromosome"/>
</dbReference>
<dbReference type="GO" id="GO:0005524">
    <property type="term" value="F:ATP binding"/>
    <property type="evidence" value="ECO:0007669"/>
    <property type="project" value="UniProtKB-UniRule"/>
</dbReference>
<dbReference type="GO" id="GO:0000287">
    <property type="term" value="F:magnesium ion binding"/>
    <property type="evidence" value="ECO:0007669"/>
    <property type="project" value="UniProtKB-UniRule"/>
</dbReference>
<dbReference type="GO" id="GO:0004478">
    <property type="term" value="F:methionine adenosyltransferase activity"/>
    <property type="evidence" value="ECO:0007669"/>
    <property type="project" value="UniProtKB-UniRule"/>
</dbReference>
<dbReference type="GO" id="GO:0006730">
    <property type="term" value="P:one-carbon metabolic process"/>
    <property type="evidence" value="ECO:0007669"/>
    <property type="project" value="UniProtKB-KW"/>
</dbReference>
<dbReference type="GO" id="GO:0006556">
    <property type="term" value="P:S-adenosylmethionine biosynthetic process"/>
    <property type="evidence" value="ECO:0007669"/>
    <property type="project" value="UniProtKB-UniRule"/>
</dbReference>
<dbReference type="Gene3D" id="3.30.300.10">
    <property type="match status" value="1"/>
</dbReference>
<dbReference type="Gene3D" id="3.30.300.280">
    <property type="entry name" value="S-adenosylmethionine synthetase, C-terminal domain"/>
    <property type="match status" value="1"/>
</dbReference>
<dbReference type="HAMAP" id="MF_00136">
    <property type="entry name" value="S_AdoMet_synth2"/>
    <property type="match status" value="1"/>
</dbReference>
<dbReference type="InterPro" id="IPR027790">
    <property type="entry name" value="AdoMet_synthase_2_family"/>
</dbReference>
<dbReference type="InterPro" id="IPR042544">
    <property type="entry name" value="AdoMet_synthase_3"/>
</dbReference>
<dbReference type="InterPro" id="IPR002795">
    <property type="entry name" value="S-AdoMet_synthetase_arc"/>
</dbReference>
<dbReference type="NCBIfam" id="NF003364">
    <property type="entry name" value="PRK04439.1-3"/>
    <property type="match status" value="1"/>
</dbReference>
<dbReference type="NCBIfam" id="NF003366">
    <property type="entry name" value="PRK04439.1-5"/>
    <property type="match status" value="1"/>
</dbReference>
<dbReference type="PANTHER" id="PTHR36697">
    <property type="entry name" value="S-ADENOSYLMETHIONINE SYNTHASE"/>
    <property type="match status" value="1"/>
</dbReference>
<dbReference type="PANTHER" id="PTHR36697:SF1">
    <property type="entry name" value="S-ADENOSYLMETHIONINE SYNTHASE"/>
    <property type="match status" value="1"/>
</dbReference>
<dbReference type="Pfam" id="PF01941">
    <property type="entry name" value="AdoMet_Synthase"/>
    <property type="match status" value="1"/>
</dbReference>
<organism>
    <name type="scientific">Archaeoglobus fulgidus (strain ATCC 49558 / DSM 4304 / JCM 9628 / NBRC 100126 / VC-16)</name>
    <dbReference type="NCBI Taxonomy" id="224325"/>
    <lineage>
        <taxon>Archaea</taxon>
        <taxon>Methanobacteriati</taxon>
        <taxon>Methanobacteriota</taxon>
        <taxon>Archaeoglobi</taxon>
        <taxon>Archaeoglobales</taxon>
        <taxon>Archaeoglobaceae</taxon>
        <taxon>Archaeoglobus</taxon>
    </lineage>
</organism>
<reference key="1">
    <citation type="journal article" date="1997" name="Nature">
        <title>The complete genome sequence of the hyperthermophilic, sulphate-reducing archaeon Archaeoglobus fulgidus.</title>
        <authorList>
            <person name="Klenk H.-P."/>
            <person name="Clayton R.A."/>
            <person name="Tomb J.-F."/>
            <person name="White O."/>
            <person name="Nelson K.E."/>
            <person name="Ketchum K.A."/>
            <person name="Dodson R.J."/>
            <person name="Gwinn M.L."/>
            <person name="Hickey E.K."/>
            <person name="Peterson J.D."/>
            <person name="Richardson D.L."/>
            <person name="Kerlavage A.R."/>
            <person name="Graham D.E."/>
            <person name="Kyrpides N.C."/>
            <person name="Fleischmann R.D."/>
            <person name="Quackenbush J."/>
            <person name="Lee N.H."/>
            <person name="Sutton G.G."/>
            <person name="Gill S.R."/>
            <person name="Kirkness E.F."/>
            <person name="Dougherty B.A."/>
            <person name="McKenney K."/>
            <person name="Adams M.D."/>
            <person name="Loftus B.J."/>
            <person name="Peterson S.N."/>
            <person name="Reich C.I."/>
            <person name="McNeil L.K."/>
            <person name="Badger J.H."/>
            <person name="Glodek A."/>
            <person name="Zhou L."/>
            <person name="Overbeek R."/>
            <person name="Gocayne J.D."/>
            <person name="Weidman J.F."/>
            <person name="McDonald L.A."/>
            <person name="Utterback T.R."/>
            <person name="Cotton M.D."/>
            <person name="Spriggs T."/>
            <person name="Artiach P."/>
            <person name="Kaine B.P."/>
            <person name="Sykes S.M."/>
            <person name="Sadow P.W."/>
            <person name="D'Andrea K.P."/>
            <person name="Bowman C."/>
            <person name="Fujii C."/>
            <person name="Garland S.A."/>
            <person name="Mason T.M."/>
            <person name="Olsen G.J."/>
            <person name="Fraser C.M."/>
            <person name="Smith H.O."/>
            <person name="Woese C.R."/>
            <person name="Venter J.C."/>
        </authorList>
    </citation>
    <scope>NUCLEOTIDE SEQUENCE [LARGE SCALE GENOMIC DNA]</scope>
    <source>
        <strain>ATCC 49558 / DSM 4304 / JCM 9628 / NBRC 100126 / VC-16</strain>
    </source>
</reference>
<accession>O30186</accession>
<feature type="chain" id="PRO_0000150025" description="S-adenosylmethionine synthase">
    <location>
        <begin position="1"/>
        <end position="399"/>
    </location>
</feature>
<feature type="binding site" evidence="2">
    <location>
        <begin position="135"/>
        <end position="140"/>
    </location>
    <ligand>
        <name>ATP</name>
        <dbReference type="ChEBI" id="CHEBI:30616"/>
    </ligand>
</feature>
<sequence length="399" mass="44487">MPNIFVEELVHTPIEKQVIEIVERKGIGHPDSLADGMAEAMSRELSREYIRRFGAVLHHNTDETQIVAGRSNPQFGGGEVIEPIYVLLVGRATKFFNGEYIPTDKIALKAARDYIRQHMQNLDPELDVVFNVRLGEGSTDLQDVFRRKSGNVALANDTSFGIGFAPLSETERLVFNVERRIYEEFRKKNPAIGEDVKVMGLREKDRISLTIAAAFVDRYVANIKEYDAIKEELENFVKEISSEYTEREVEVFVNTADDYETGCVYLTVTGTSAENGDDGSVGRGNRCNGLITPGRPMSMEASSGKNPINHVGKIYNLLANQIAARIAEEVEGVEEVYVRILSQIGKPINEPKALSVQVIPKSGYDISKLERPARDIAEEMIANVGKITDMVIEGKVRTF</sequence>